<reference key="1">
    <citation type="journal article" date="2004" name="Genome Res.">
        <title>The status, quality, and expansion of the NIH full-length cDNA project: the Mammalian Gene Collection (MGC).</title>
        <authorList>
            <consortium name="The MGC Project Team"/>
        </authorList>
    </citation>
    <scope>NUCLEOTIDE SEQUENCE [LARGE SCALE MRNA]</scope>
    <source>
        <tissue>Liver</tissue>
    </source>
</reference>
<reference key="2">
    <citation type="submission" date="2003-06" db="EMBL/GenBank/DDBJ databases">
        <title>Liver regeneration after PH.</title>
        <authorList>
            <person name="Xu C.S."/>
            <person name="Yuan J.Y."/>
            <person name="Li W.Q."/>
            <person name="Han H.P."/>
            <person name="Yang K.J."/>
            <person name="Chang C.F."/>
            <person name="Zhao L.F."/>
            <person name="Li Y.C."/>
            <person name="Zhang H.Y."/>
            <person name="Rahman S."/>
            <person name="Zhang J.B."/>
        </authorList>
    </citation>
    <scope>NUCLEOTIDE SEQUENCE [LARGE SCALE MRNA] OF 69-308</scope>
    <source>
        <tissue>Liver</tissue>
    </source>
</reference>
<sequence>MGAQLLTCTVSDSIRHQFSCFATSCCVLWVPKGVSTMLPPSQLGSQPPTSDPLSCQALLPRSLPGFTHMPPLSKFLVGLALRNALEEAGCWADVWALQLQLYRFGGVEATQALIRHLQELQKGGRADWKVSVNALSSALQLLAWEQAGPKRVKRSLSNMGCENEQEQRVHNVVELLPAVGTYYNLGTALYYAIKNCTDKAKERGRDGAIDLGYDLLMTMVGMSGGPTGAVITAALKPALKAGVQRLIRYYHDEEGVTTSQPETRKDAPTYRDDVEETTMSNLVSEVESTTSNWGRPLLKNYVFLAYKR</sequence>
<evidence type="ECO:0000250" key="1">
    <source>
        <dbReference type="UniProtKB" id="Q13790"/>
    </source>
</evidence>
<evidence type="ECO:0000255" key="2"/>
<evidence type="ECO:0000305" key="3"/>
<gene>
    <name type="primary">Apof</name>
    <name type="ORF">Ba1-666</name>
</gene>
<keyword id="KW-0153">Cholesterol metabolism</keyword>
<keyword id="KW-0165">Cleavage on pair of basic residues</keyword>
<keyword id="KW-0345">HDL</keyword>
<keyword id="KW-0427">LDL</keyword>
<keyword id="KW-0443">Lipid metabolism</keyword>
<keyword id="KW-0445">Lipid transport</keyword>
<keyword id="KW-1185">Reference proteome</keyword>
<keyword id="KW-0964">Secreted</keyword>
<keyword id="KW-0732">Signal</keyword>
<keyword id="KW-0753">Steroid metabolism</keyword>
<keyword id="KW-1207">Sterol metabolism</keyword>
<keyword id="KW-0813">Transport</keyword>
<feature type="signal peptide" evidence="2">
    <location>
        <begin position="1"/>
        <end status="unknown"/>
    </location>
</feature>
<feature type="propeptide" id="PRO_0000002055" evidence="2">
    <location>
        <begin status="unknown"/>
        <end position="154"/>
    </location>
</feature>
<feature type="chain" id="PRO_0000002056" description="Apolipoprotein F">
    <location>
        <begin position="155"/>
        <end position="308"/>
    </location>
</feature>
<accession>Q5M889</accession>
<accession>Q7TP25</accession>
<comment type="function">
    <text evidence="1">Minor apolipoprotein that associates with LDL. Inhibits cholesteryl ester transfer protein (CETP) activity and appears to be an important regulator of cholesterol transport. Also associates to a lesser degree with VLDL, Apo-AI and Apo-AII.</text>
</comment>
<comment type="subcellular location">
    <subcellularLocation>
        <location evidence="1">Secreted</location>
    </subcellularLocation>
</comment>
<comment type="similarity">
    <text evidence="3">Belongs to the apolipoprotein F family.</text>
</comment>
<proteinExistence type="evidence at transcript level"/>
<dbReference type="EMBL" id="BC088170">
    <property type="protein sequence ID" value="AAH88170.1"/>
    <property type="molecule type" value="mRNA"/>
</dbReference>
<dbReference type="EMBL" id="AY325229">
    <property type="protein sequence ID" value="AAP92630.1"/>
    <property type="molecule type" value="mRNA"/>
</dbReference>
<dbReference type="RefSeq" id="NP_001019522.1">
    <property type="nucleotide sequence ID" value="NM_001024351.1"/>
</dbReference>
<dbReference type="FunCoup" id="Q5M889">
    <property type="interactions" value="2"/>
</dbReference>
<dbReference type="STRING" id="10116.ENSRNOP00000049259"/>
<dbReference type="GlyGen" id="Q5M889">
    <property type="glycosylation" value="1 site"/>
</dbReference>
<dbReference type="PhosphoSitePlus" id="Q5M889"/>
<dbReference type="PaxDb" id="10116-ENSRNOP00000049259"/>
<dbReference type="UCSC" id="RGD:1560713">
    <property type="organism name" value="rat"/>
</dbReference>
<dbReference type="AGR" id="RGD:1560713"/>
<dbReference type="RGD" id="1560713">
    <property type="gene designation" value="Apof"/>
</dbReference>
<dbReference type="eggNOG" id="ENOG502QUQ0">
    <property type="taxonomic scope" value="Eukaryota"/>
</dbReference>
<dbReference type="HOGENOM" id="CLU_078958_0_0_1"/>
<dbReference type="InParanoid" id="Q5M889"/>
<dbReference type="PhylomeDB" id="Q5M889"/>
<dbReference type="TreeFam" id="TF338778"/>
<dbReference type="PRO" id="PR:Q5M889"/>
<dbReference type="Proteomes" id="UP000002494">
    <property type="component" value="Chromosome 7"/>
</dbReference>
<dbReference type="Bgee" id="ENSRNOG00000033619">
    <property type="expression patterns" value="Expressed in liver and 3 other cell types or tissues"/>
</dbReference>
<dbReference type="GO" id="GO:0005615">
    <property type="term" value="C:extracellular space"/>
    <property type="evidence" value="ECO:0000250"/>
    <property type="project" value="UniProtKB"/>
</dbReference>
<dbReference type="GO" id="GO:0034364">
    <property type="term" value="C:high-density lipoprotein particle"/>
    <property type="evidence" value="ECO:0007669"/>
    <property type="project" value="UniProtKB-KW"/>
</dbReference>
<dbReference type="GO" id="GO:0034362">
    <property type="term" value="C:low-density lipoprotein particle"/>
    <property type="evidence" value="ECO:0007669"/>
    <property type="project" value="UniProtKB-KW"/>
</dbReference>
<dbReference type="GO" id="GO:0033344">
    <property type="term" value="P:cholesterol efflux"/>
    <property type="evidence" value="ECO:0000266"/>
    <property type="project" value="RGD"/>
</dbReference>
<dbReference type="GO" id="GO:0008203">
    <property type="term" value="P:cholesterol metabolic process"/>
    <property type="evidence" value="ECO:0000266"/>
    <property type="project" value="RGD"/>
</dbReference>
<dbReference type="GO" id="GO:0006641">
    <property type="term" value="P:triglyceride metabolic process"/>
    <property type="evidence" value="ECO:0000266"/>
    <property type="project" value="RGD"/>
</dbReference>
<dbReference type="InterPro" id="IPR026114">
    <property type="entry name" value="APOF"/>
</dbReference>
<dbReference type="PANTHER" id="PTHR15011">
    <property type="entry name" value="APOLIPOPROTEIN F"/>
    <property type="match status" value="1"/>
</dbReference>
<dbReference type="PANTHER" id="PTHR15011:SF3">
    <property type="entry name" value="APOLIPOPROTEIN F"/>
    <property type="match status" value="1"/>
</dbReference>
<dbReference type="Pfam" id="PF15148">
    <property type="entry name" value="Apolipo_F"/>
    <property type="match status" value="1"/>
</dbReference>
<name>APOF_RAT</name>
<protein>
    <recommendedName>
        <fullName>Apolipoprotein F</fullName>
        <shortName>Apo-F</shortName>
    </recommendedName>
    <alternativeName>
        <fullName>Liver regeneration-related protein LRRG151</fullName>
    </alternativeName>
</protein>
<organism>
    <name type="scientific">Rattus norvegicus</name>
    <name type="common">Rat</name>
    <dbReference type="NCBI Taxonomy" id="10116"/>
    <lineage>
        <taxon>Eukaryota</taxon>
        <taxon>Metazoa</taxon>
        <taxon>Chordata</taxon>
        <taxon>Craniata</taxon>
        <taxon>Vertebrata</taxon>
        <taxon>Euteleostomi</taxon>
        <taxon>Mammalia</taxon>
        <taxon>Eutheria</taxon>
        <taxon>Euarchontoglires</taxon>
        <taxon>Glires</taxon>
        <taxon>Rodentia</taxon>
        <taxon>Myomorpha</taxon>
        <taxon>Muroidea</taxon>
        <taxon>Muridae</taxon>
        <taxon>Murinae</taxon>
        <taxon>Rattus</taxon>
    </lineage>
</organism>